<proteinExistence type="evidence at transcript level"/>
<organism>
    <name type="scientific">Bos taurus</name>
    <name type="common">Bovine</name>
    <dbReference type="NCBI Taxonomy" id="9913"/>
    <lineage>
        <taxon>Eukaryota</taxon>
        <taxon>Metazoa</taxon>
        <taxon>Chordata</taxon>
        <taxon>Craniata</taxon>
        <taxon>Vertebrata</taxon>
        <taxon>Euteleostomi</taxon>
        <taxon>Mammalia</taxon>
        <taxon>Eutheria</taxon>
        <taxon>Laurasiatheria</taxon>
        <taxon>Artiodactyla</taxon>
        <taxon>Ruminantia</taxon>
        <taxon>Pecora</taxon>
        <taxon>Bovidae</taxon>
        <taxon>Bovinae</taxon>
        <taxon>Bos</taxon>
    </lineage>
</organism>
<protein>
    <recommendedName>
        <fullName>Solute carrier family 7 member 14</fullName>
    </recommendedName>
    <alternativeName>
        <fullName evidence="2">Gamma-aminobutyric acid transporter SLC7A14</fullName>
    </alternativeName>
</protein>
<evidence type="ECO:0000250" key="1"/>
<evidence type="ECO:0000250" key="2">
    <source>
        <dbReference type="UniProtKB" id="Q8BXR1"/>
    </source>
</evidence>
<evidence type="ECO:0000255" key="3"/>
<evidence type="ECO:0000256" key="4">
    <source>
        <dbReference type="SAM" id="MobiDB-lite"/>
    </source>
</evidence>
<evidence type="ECO:0000305" key="5"/>
<dbReference type="EMBL" id="BC126705">
    <property type="protein sequence ID" value="AAI26706.1"/>
    <property type="molecule type" value="mRNA"/>
</dbReference>
<dbReference type="RefSeq" id="NP_001071460.1">
    <property type="nucleotide sequence ID" value="NM_001077992.2"/>
</dbReference>
<dbReference type="SMR" id="A0JNI9"/>
<dbReference type="FunCoup" id="A0JNI9">
    <property type="interactions" value="974"/>
</dbReference>
<dbReference type="STRING" id="9913.ENSBTAP00000031960"/>
<dbReference type="GlyCosmos" id="A0JNI9">
    <property type="glycosylation" value="2 sites, No reported glycans"/>
</dbReference>
<dbReference type="GlyGen" id="A0JNI9">
    <property type="glycosylation" value="2 sites"/>
</dbReference>
<dbReference type="PaxDb" id="9913-ENSBTAP00000031960"/>
<dbReference type="Ensembl" id="ENSBTAT00000032016.4">
    <property type="protein sequence ID" value="ENSBTAP00000031960.3"/>
    <property type="gene ID" value="ENSBTAG00000016323.5"/>
</dbReference>
<dbReference type="GeneID" id="533046"/>
<dbReference type="KEGG" id="bta:533046"/>
<dbReference type="CTD" id="57709"/>
<dbReference type="VEuPathDB" id="HostDB:ENSBTAG00000016323"/>
<dbReference type="VGNC" id="VGNC:34927">
    <property type="gene designation" value="SLC7A14"/>
</dbReference>
<dbReference type="eggNOG" id="KOG1286">
    <property type="taxonomic scope" value="Eukaryota"/>
</dbReference>
<dbReference type="GeneTree" id="ENSGT00940000155893"/>
<dbReference type="HOGENOM" id="CLU_007946_15_7_1"/>
<dbReference type="InParanoid" id="A0JNI9"/>
<dbReference type="OMA" id="GFVMYFY"/>
<dbReference type="OrthoDB" id="3900342at2759"/>
<dbReference type="TreeFam" id="TF315212"/>
<dbReference type="Proteomes" id="UP000009136">
    <property type="component" value="Chromosome 1"/>
</dbReference>
<dbReference type="Bgee" id="ENSBTAG00000016323">
    <property type="expression patterns" value="Expressed in occipital lobe and 17 other cell types or tissues"/>
</dbReference>
<dbReference type="GO" id="GO:0005829">
    <property type="term" value="C:cytosol"/>
    <property type="evidence" value="ECO:0007669"/>
    <property type="project" value="Ensembl"/>
</dbReference>
<dbReference type="GO" id="GO:0005765">
    <property type="term" value="C:lysosomal membrane"/>
    <property type="evidence" value="ECO:0000250"/>
    <property type="project" value="UniProtKB"/>
</dbReference>
<dbReference type="GO" id="GO:0005654">
    <property type="term" value="C:nucleoplasm"/>
    <property type="evidence" value="ECO:0007669"/>
    <property type="project" value="Ensembl"/>
</dbReference>
<dbReference type="GO" id="GO:0005886">
    <property type="term" value="C:plasma membrane"/>
    <property type="evidence" value="ECO:0000318"/>
    <property type="project" value="GO_Central"/>
</dbReference>
<dbReference type="GO" id="GO:0015171">
    <property type="term" value="F:amino acid transmembrane transporter activity"/>
    <property type="evidence" value="ECO:0000318"/>
    <property type="project" value="GO_Central"/>
</dbReference>
<dbReference type="GO" id="GO:0015185">
    <property type="term" value="F:gamma-aminobutyric acid transmembrane transporter activity"/>
    <property type="evidence" value="ECO:0000250"/>
    <property type="project" value="UniProtKB"/>
</dbReference>
<dbReference type="GO" id="GO:0006865">
    <property type="term" value="P:amino acid transport"/>
    <property type="evidence" value="ECO:0000318"/>
    <property type="project" value="GO_Central"/>
</dbReference>
<dbReference type="GO" id="GO:0051939">
    <property type="term" value="P:gamma-aminobutyric acid import"/>
    <property type="evidence" value="ECO:0000250"/>
    <property type="project" value="UniProtKB"/>
</dbReference>
<dbReference type="FunFam" id="1.20.1740.10:FF:000010">
    <property type="entry name" value="probable cationic amino acid transporter"/>
    <property type="match status" value="1"/>
</dbReference>
<dbReference type="Gene3D" id="1.20.1740.10">
    <property type="entry name" value="Amino acid/polyamine transporter I"/>
    <property type="match status" value="2"/>
</dbReference>
<dbReference type="InterPro" id="IPR002293">
    <property type="entry name" value="AA/rel_permease1"/>
</dbReference>
<dbReference type="InterPro" id="IPR029485">
    <property type="entry name" value="CAT_C"/>
</dbReference>
<dbReference type="PANTHER" id="PTHR43243:SF17">
    <property type="entry name" value="CATIONIC AMINO ACID TRANSPORTER-RELATED"/>
    <property type="match status" value="1"/>
</dbReference>
<dbReference type="PANTHER" id="PTHR43243">
    <property type="entry name" value="INNER MEMBRANE TRANSPORTER YGJI-RELATED"/>
    <property type="match status" value="1"/>
</dbReference>
<dbReference type="Pfam" id="PF13520">
    <property type="entry name" value="AA_permease_2"/>
    <property type="match status" value="1"/>
</dbReference>
<dbReference type="Pfam" id="PF13906">
    <property type="entry name" value="AA_permease_C"/>
    <property type="match status" value="1"/>
</dbReference>
<sequence length="771" mass="84188">MSGFLTSLDPRRVQWGAAWYAMHSRILRTKPVESMLEGTGATTAHGTKLAQVLTTMDLISLGVGSCVGTGMYVVSGLVAKEMAGPGVIVSFIIAAVASILSGVCYAEFGVRVPKTTGSAYTYSYVTVGEFVAFFIGWNLILEYLIGTAAGASALSSMFDSLANHTISRWMVDSVGTLNGLGKGEQSYPDLLALVIAIIVTIIVALGVKNSVGFNNVLNVLNLAVWVFIMIAGFFFINGKYWAEGQFLPYGWSGVLQGAATCFYAFIGFDIIATTGEEAKNPNTSIPYAITASLVICLTAYVSVSMILTLMVPYDTIDTESPLMEMFVARGFYAAKFVVAIGSVAGLTVSLLGSLFPMPRVIYAMAGDGLLFRFLAHVSSYTETPVVACIVSGFLAALLSLLVSLRDLIEMMSIGTLLAYTLVSVCVLLLRYQPESDIDGFVKFLSEEHTKKKEGILADCEKEVCSPVSEGEEFSGPATNTCGAKNLPSLGDNEMLIGKSDKSTYNVNHPNYGTVDMTTGIEADESENIYLIKLKKLIGPRYYTMRIQLGLPGKMDRPTAATGHTVTICVLLLFILMFVFCSFIIFGSDYISEQSWWAILLVVLMVLLISALVFVILQQPENPKKLPYMAPCLPFVPAFAMLVNIYLMLKLSTITWIRFAVWCFVGMLIYFGYGIWNSTLEISAREEALHQSTYQRYDVDDPFSVEEGFSYATEGESQENWGGPAEDKGFYYQQMSDTQPNTRTSSKAKSKSKHKQNSEALIANDELDYSPE</sequence>
<feature type="chain" id="PRO_0000307359" description="Solute carrier family 7 member 14">
    <location>
        <begin position="1"/>
        <end position="771"/>
    </location>
</feature>
<feature type="transmembrane region" description="Helical" evidence="3">
    <location>
        <begin position="58"/>
        <end position="78"/>
    </location>
</feature>
<feature type="transmembrane region" description="Helical" evidence="3">
    <location>
        <begin position="83"/>
        <end position="103"/>
    </location>
</feature>
<feature type="transmembrane region" description="Helical" evidence="3">
    <location>
        <begin position="130"/>
        <end position="150"/>
    </location>
</feature>
<feature type="transmembrane region" description="Helical" evidence="3">
    <location>
        <begin position="187"/>
        <end position="207"/>
    </location>
</feature>
<feature type="transmembrane region" description="Helical" evidence="3">
    <location>
        <begin position="216"/>
        <end position="236"/>
    </location>
</feature>
<feature type="transmembrane region" description="Helical" evidence="3">
    <location>
        <begin position="251"/>
        <end position="271"/>
    </location>
</feature>
<feature type="transmembrane region" description="Helical" evidence="3">
    <location>
        <begin position="291"/>
        <end position="311"/>
    </location>
</feature>
<feature type="transmembrane region" description="Helical" evidence="3">
    <location>
        <begin position="336"/>
        <end position="356"/>
    </location>
</feature>
<feature type="transmembrane region" description="Helical" evidence="3">
    <location>
        <begin position="360"/>
        <end position="380"/>
    </location>
</feature>
<feature type="transmembrane region" description="Helical" evidence="3">
    <location>
        <begin position="384"/>
        <end position="404"/>
    </location>
</feature>
<feature type="transmembrane region" description="Helical" evidence="3">
    <location>
        <begin position="407"/>
        <end position="427"/>
    </location>
</feature>
<feature type="transmembrane region" description="Helical" evidence="3">
    <location>
        <begin position="565"/>
        <end position="585"/>
    </location>
</feature>
<feature type="transmembrane region" description="Helical" evidence="3">
    <location>
        <begin position="596"/>
        <end position="616"/>
    </location>
</feature>
<feature type="transmembrane region" description="Helical" evidence="3">
    <location>
        <begin position="628"/>
        <end position="648"/>
    </location>
</feature>
<feature type="transmembrane region" description="Helical" evidence="3">
    <location>
        <begin position="655"/>
        <end position="675"/>
    </location>
</feature>
<feature type="region of interest" description="Disordered" evidence="4">
    <location>
        <begin position="712"/>
        <end position="771"/>
    </location>
</feature>
<feature type="compositionally biased region" description="Polar residues" evidence="4">
    <location>
        <begin position="732"/>
        <end position="743"/>
    </location>
</feature>
<feature type="compositionally biased region" description="Basic residues" evidence="4">
    <location>
        <begin position="745"/>
        <end position="754"/>
    </location>
</feature>
<feature type="modified residue" description="Phosphoserine" evidence="2">
    <location>
        <position position="465"/>
    </location>
</feature>
<feature type="modified residue" description="Phosphoserine" evidence="2">
    <location>
        <position position="468"/>
    </location>
</feature>
<feature type="modified residue" description="Phosphoserine" evidence="2">
    <location>
        <position position="488"/>
    </location>
</feature>
<feature type="modified residue" description="Phosphoserine" evidence="2">
    <location>
        <position position="757"/>
    </location>
</feature>
<feature type="modified residue" description="Phosphoserine" evidence="2">
    <location>
        <position position="769"/>
    </location>
</feature>
<feature type="glycosylation site" description="N-linked (GlcNAc...) asparagine" evidence="3">
    <location>
        <position position="282"/>
    </location>
</feature>
<feature type="glycosylation site" description="N-linked (GlcNAc...) asparagine" evidence="3">
    <location>
        <position position="676"/>
    </location>
</feature>
<gene>
    <name evidence="2" type="primary">SLC7A14</name>
</gene>
<name>S7A14_BOVIN</name>
<accession>A0JNI9</accession>
<reference key="1">
    <citation type="submission" date="2006-10" db="EMBL/GenBank/DDBJ databases">
        <authorList>
            <consortium name="NIH - Mammalian Gene Collection (MGC) project"/>
        </authorList>
    </citation>
    <scope>NUCLEOTIDE SEQUENCE [LARGE SCALE MRNA]</scope>
    <source>
        <strain>Hereford</strain>
        <tissue>Hypothalamus</tissue>
    </source>
</reference>
<keyword id="KW-0029">Amino-acid transport</keyword>
<keyword id="KW-0325">Glycoprotein</keyword>
<keyword id="KW-0458">Lysosome</keyword>
<keyword id="KW-0472">Membrane</keyword>
<keyword id="KW-0597">Phosphoprotein</keyword>
<keyword id="KW-1185">Reference proteome</keyword>
<keyword id="KW-0812">Transmembrane</keyword>
<keyword id="KW-1133">Transmembrane helix</keyword>
<keyword id="KW-0813">Transport</keyword>
<comment type="function">
    <text evidence="2">Imports 4-aminobutanoate (GABA) into lysosomes. May act as a GABA sensor that regulates mTORC2-dependent INS signaling and gluconeogenesis. The transport mechanism and substrate selectivity remain to be elucidated.</text>
</comment>
<comment type="catalytic activity">
    <reaction evidence="2">
        <text>4-aminobutanoate(in) = 4-aminobutanoate(out)</text>
        <dbReference type="Rhea" id="RHEA:35035"/>
        <dbReference type="ChEBI" id="CHEBI:59888"/>
    </reaction>
    <physiologicalReaction direction="right-to-left" evidence="2">
        <dbReference type="Rhea" id="RHEA:35037"/>
    </physiologicalReaction>
</comment>
<comment type="subcellular location">
    <subcellularLocation>
        <location evidence="2">Lysosome membrane</location>
        <topology evidence="3">Multi-pass membrane protein</topology>
    </subcellularLocation>
    <text evidence="1">Exhibits a punctated pattern in the cytoplasm, which partially ovelaps with lysosomes.</text>
</comment>
<comment type="similarity">
    <text evidence="5">Belongs to the amino acid-polyamine-organocation (APC) superfamily. Cationic amino acid transporter (CAT) (TC 2.A.3.3) family.</text>
</comment>